<name>YIAF_ECOLI</name>
<evidence type="ECO:0000305" key="1"/>
<organism>
    <name type="scientific">Escherichia coli (strain K12)</name>
    <dbReference type="NCBI Taxonomy" id="83333"/>
    <lineage>
        <taxon>Bacteria</taxon>
        <taxon>Pseudomonadati</taxon>
        <taxon>Pseudomonadota</taxon>
        <taxon>Gammaproteobacteria</taxon>
        <taxon>Enterobacterales</taxon>
        <taxon>Enterobacteriaceae</taxon>
        <taxon>Escherichia</taxon>
    </lineage>
</organism>
<proteinExistence type="predicted"/>
<feature type="chain" id="PRO_0000169590" description="Uncharacterized protein YiaF">
    <location>
        <begin position="1"/>
        <end position="236"/>
    </location>
</feature>
<keyword id="KW-1185">Reference proteome</keyword>
<reference key="1">
    <citation type="journal article" date="1994" name="Nucleic Acids Res.">
        <title>Analysis of the Escherichia coli genome. V. DNA sequence of the region from 76.0 to 81.5 minutes.</title>
        <authorList>
            <person name="Sofia H.J."/>
            <person name="Burland V."/>
            <person name="Daniels D.L."/>
            <person name="Plunkett G. III"/>
            <person name="Blattner F.R."/>
        </authorList>
    </citation>
    <scope>NUCLEOTIDE SEQUENCE [LARGE SCALE GENOMIC DNA]</scope>
    <source>
        <strain>K12 / MG1655 / ATCC 47076</strain>
    </source>
</reference>
<reference key="2">
    <citation type="journal article" date="1997" name="Science">
        <title>The complete genome sequence of Escherichia coli K-12.</title>
        <authorList>
            <person name="Blattner F.R."/>
            <person name="Plunkett G. III"/>
            <person name="Bloch C.A."/>
            <person name="Perna N.T."/>
            <person name="Burland V."/>
            <person name="Riley M."/>
            <person name="Collado-Vides J."/>
            <person name="Glasner J.D."/>
            <person name="Rode C.K."/>
            <person name="Mayhew G.F."/>
            <person name="Gregor J."/>
            <person name="Davis N.W."/>
            <person name="Kirkpatrick H.A."/>
            <person name="Goeden M.A."/>
            <person name="Rose D.J."/>
            <person name="Mau B."/>
            <person name="Shao Y."/>
        </authorList>
    </citation>
    <scope>NUCLEOTIDE SEQUENCE [LARGE SCALE GENOMIC DNA]</scope>
    <source>
        <strain>K12 / MG1655 / ATCC 47076</strain>
    </source>
</reference>
<reference key="3">
    <citation type="journal article" date="2006" name="Mol. Syst. Biol.">
        <title>Highly accurate genome sequences of Escherichia coli K-12 strains MG1655 and W3110.</title>
        <authorList>
            <person name="Hayashi K."/>
            <person name="Morooka N."/>
            <person name="Yamamoto Y."/>
            <person name="Fujita K."/>
            <person name="Isono K."/>
            <person name="Choi S."/>
            <person name="Ohtsubo E."/>
            <person name="Baba T."/>
            <person name="Wanner B.L."/>
            <person name="Mori H."/>
            <person name="Horiuchi T."/>
        </authorList>
    </citation>
    <scope>NUCLEOTIDE SEQUENCE [LARGE SCALE GENOMIC DNA]</scope>
    <source>
        <strain>K12 / W3110 / ATCC 27325 / DSM 5911</strain>
    </source>
</reference>
<accession>P0ADK0</accession>
<accession>P37667</accession>
<accession>Q2M7L5</accession>
<protein>
    <recommendedName>
        <fullName>Uncharacterized protein YiaF</fullName>
    </recommendedName>
</protein>
<comment type="sequence caution" evidence="1">
    <conflict type="erroneous initiation">
        <sequence resource="EMBL-CDS" id="AAB18531"/>
    </conflict>
</comment>
<gene>
    <name type="primary">yiaF</name>
    <name type="ordered locus">b3554</name>
    <name type="ordered locus">JW5655</name>
</gene>
<sequence length="236" mass="25663">MATGKSCSRWFAPLAALLMVVSLSGCFDKEGDQRKAFIDFLQNTVMRSGERLPTLTADQKKQFGPFVSDYAILYGYSQQVNQAMDSGLRPVVDSVNAIRVPQDYVTQSGPLREMNGSLGVLAQQLQNAKLQADAAHSALKQSDDLKPVFDQAFTKVVTTPADALQPLIPAAQTFTQQLVMVGDYIAQQGTQVSFVANGIQFPTSQQASEYNKLIAPLPAQHQAFNQAWTTAVTATQ</sequence>
<dbReference type="EMBL" id="U00039">
    <property type="protein sequence ID" value="AAB18531.1"/>
    <property type="status" value="ALT_INIT"/>
    <property type="molecule type" value="Genomic_DNA"/>
</dbReference>
<dbReference type="EMBL" id="U00096">
    <property type="protein sequence ID" value="AAC76578.2"/>
    <property type="molecule type" value="Genomic_DNA"/>
</dbReference>
<dbReference type="EMBL" id="AP009048">
    <property type="protein sequence ID" value="BAE77741.1"/>
    <property type="molecule type" value="Genomic_DNA"/>
</dbReference>
<dbReference type="PIR" id="S47775">
    <property type="entry name" value="S47775"/>
</dbReference>
<dbReference type="RefSeq" id="NP_418010.2">
    <property type="nucleotide sequence ID" value="NC_000913.3"/>
</dbReference>
<dbReference type="RefSeq" id="WP_000190516.1">
    <property type="nucleotide sequence ID" value="NZ_SSZK01000068.1"/>
</dbReference>
<dbReference type="BioGRID" id="4262538">
    <property type="interactions" value="205"/>
</dbReference>
<dbReference type="BioGRID" id="852380">
    <property type="interactions" value="2"/>
</dbReference>
<dbReference type="FunCoup" id="P0ADK0">
    <property type="interactions" value="17"/>
</dbReference>
<dbReference type="IntAct" id="P0ADK0">
    <property type="interactions" value="3"/>
</dbReference>
<dbReference type="STRING" id="511145.b3554"/>
<dbReference type="jPOST" id="P0ADK0"/>
<dbReference type="PaxDb" id="511145-b3554"/>
<dbReference type="EnsemblBacteria" id="AAC76578">
    <property type="protein sequence ID" value="AAC76578"/>
    <property type="gene ID" value="b3554"/>
</dbReference>
<dbReference type="GeneID" id="948072"/>
<dbReference type="KEGG" id="ecj:JW5655"/>
<dbReference type="KEGG" id="eco:b3554"/>
<dbReference type="KEGG" id="ecoc:C3026_19265"/>
<dbReference type="PATRIC" id="fig|511145.12.peg.3667"/>
<dbReference type="EchoBASE" id="EB2182"/>
<dbReference type="eggNOG" id="ENOG502ZAGZ">
    <property type="taxonomic scope" value="Bacteria"/>
</dbReference>
<dbReference type="HOGENOM" id="CLU_086363_0_0_6"/>
<dbReference type="InParanoid" id="P0ADK0"/>
<dbReference type="OMA" id="KMQADSS"/>
<dbReference type="OrthoDB" id="8821151at2"/>
<dbReference type="PhylomeDB" id="P0ADK0"/>
<dbReference type="BioCyc" id="EcoCyc:EG12273-MONOMER"/>
<dbReference type="PRO" id="PR:P0ADK0"/>
<dbReference type="Proteomes" id="UP000000625">
    <property type="component" value="Chromosome"/>
</dbReference>
<dbReference type="GO" id="GO:0044403">
    <property type="term" value="P:biological process involved in symbiotic interaction"/>
    <property type="evidence" value="ECO:0000315"/>
    <property type="project" value="EcoCyc"/>
</dbReference>
<dbReference type="InterPro" id="IPR021413">
    <property type="entry name" value="DUF3053"/>
</dbReference>
<dbReference type="Pfam" id="PF11254">
    <property type="entry name" value="DUF3053"/>
    <property type="match status" value="1"/>
</dbReference>
<dbReference type="PROSITE" id="PS51257">
    <property type="entry name" value="PROKAR_LIPOPROTEIN"/>
    <property type="match status" value="1"/>
</dbReference>